<feature type="chain" id="PRO_0000144228" description="UPF0216 protein PF0452">
    <location>
        <begin position="1"/>
        <end position="136"/>
    </location>
</feature>
<evidence type="ECO:0000255" key="1">
    <source>
        <dbReference type="HAMAP-Rule" id="MF_00585"/>
    </source>
</evidence>
<reference key="1">
    <citation type="journal article" date="1999" name="Genetics">
        <title>Divergence of the hyperthermophilic archaea Pyrococcus furiosus and P. horikoshii inferred from complete genomic sequences.</title>
        <authorList>
            <person name="Maeder D.L."/>
            <person name="Weiss R.B."/>
            <person name="Dunn D.M."/>
            <person name="Cherry J.L."/>
            <person name="Gonzalez J.M."/>
            <person name="DiRuggiero J."/>
            <person name="Robb F.T."/>
        </authorList>
    </citation>
    <scope>NUCLEOTIDE SEQUENCE [LARGE SCALE GENOMIC DNA]</scope>
    <source>
        <strain>ATCC 43587 / DSM 3638 / JCM 8422 / Vc1</strain>
    </source>
</reference>
<sequence>MEKVDRIIQMEIGRINSHLPKARKSLCELLKEDSPSIELRDGSLHYFRRSELEFLKTLAGEEACLVKLPIILELSTLDRGYFVVRGRGEVRVIKKLLELSEDIYLEENTVRLPRYYLPTIRRKLPTTTVYAFITEW</sequence>
<protein>
    <recommendedName>
        <fullName evidence="1">UPF0216 protein PF0452</fullName>
    </recommendedName>
</protein>
<name>Y452_PYRFU</name>
<accession>Q8U3L4</accession>
<proteinExistence type="inferred from homology"/>
<gene>
    <name type="ordered locus">PF0452</name>
</gene>
<organism>
    <name type="scientific">Pyrococcus furiosus (strain ATCC 43587 / DSM 3638 / JCM 8422 / Vc1)</name>
    <dbReference type="NCBI Taxonomy" id="186497"/>
    <lineage>
        <taxon>Archaea</taxon>
        <taxon>Methanobacteriati</taxon>
        <taxon>Methanobacteriota</taxon>
        <taxon>Thermococci</taxon>
        <taxon>Thermococcales</taxon>
        <taxon>Thermococcaceae</taxon>
        <taxon>Pyrococcus</taxon>
    </lineage>
</organism>
<comment type="similarity">
    <text evidence="1">Belongs to the UPF0216 family.</text>
</comment>
<keyword id="KW-1185">Reference proteome</keyword>
<dbReference type="EMBL" id="AE009950">
    <property type="protein sequence ID" value="AAL80576.1"/>
    <property type="molecule type" value="Genomic_DNA"/>
</dbReference>
<dbReference type="RefSeq" id="WP_011011569.1">
    <property type="nucleotide sequence ID" value="NZ_CP023154.1"/>
</dbReference>
<dbReference type="STRING" id="186497.PF0452"/>
<dbReference type="PaxDb" id="186497-PF0452"/>
<dbReference type="KEGG" id="pfu:PF0452"/>
<dbReference type="PATRIC" id="fig|186497.12.peg.476"/>
<dbReference type="eggNOG" id="arCOG01921">
    <property type="taxonomic scope" value="Archaea"/>
</dbReference>
<dbReference type="HOGENOM" id="CLU_146474_0_0_2"/>
<dbReference type="OrthoDB" id="18795at2157"/>
<dbReference type="PhylomeDB" id="Q8U3L4"/>
<dbReference type="Proteomes" id="UP000001013">
    <property type="component" value="Chromosome"/>
</dbReference>
<dbReference type="HAMAP" id="MF_00585">
    <property type="entry name" value="UPF0216"/>
    <property type="match status" value="1"/>
</dbReference>
<dbReference type="InterPro" id="IPR002746">
    <property type="entry name" value="UPF0216"/>
</dbReference>
<dbReference type="NCBIfam" id="NF003153">
    <property type="entry name" value="PRK04115.1"/>
    <property type="match status" value="1"/>
</dbReference>
<dbReference type="Pfam" id="PF01886">
    <property type="entry name" value="DUF61"/>
    <property type="match status" value="1"/>
</dbReference>
<dbReference type="PIRSF" id="PIRSF005264">
    <property type="entry name" value="UCP005264"/>
    <property type="match status" value="1"/>
</dbReference>